<dbReference type="EMBL" id="AE015451">
    <property type="protein sequence ID" value="AAN69742.1"/>
    <property type="molecule type" value="Genomic_DNA"/>
</dbReference>
<dbReference type="RefSeq" id="NP_746278.1">
    <property type="nucleotide sequence ID" value="NC_002947.4"/>
</dbReference>
<dbReference type="RefSeq" id="WP_010954929.1">
    <property type="nucleotide sequence ID" value="NZ_CP169744.1"/>
</dbReference>
<dbReference type="SMR" id="Q88FD7"/>
<dbReference type="STRING" id="160488.PP_4161"/>
<dbReference type="PaxDb" id="160488-PP_4161"/>
<dbReference type="GeneID" id="83679150"/>
<dbReference type="KEGG" id="ppu:PP_4161"/>
<dbReference type="PATRIC" id="fig|160488.4.peg.4423"/>
<dbReference type="eggNOG" id="COG2060">
    <property type="taxonomic scope" value="Bacteria"/>
</dbReference>
<dbReference type="HOGENOM" id="CLU_018614_3_0_6"/>
<dbReference type="OrthoDB" id="9763796at2"/>
<dbReference type="PhylomeDB" id="Q88FD7"/>
<dbReference type="BioCyc" id="PPUT160488:G1G01-4427-MONOMER"/>
<dbReference type="Proteomes" id="UP000000556">
    <property type="component" value="Chromosome"/>
</dbReference>
<dbReference type="GO" id="GO:0005886">
    <property type="term" value="C:plasma membrane"/>
    <property type="evidence" value="ECO:0007669"/>
    <property type="project" value="UniProtKB-SubCell"/>
</dbReference>
<dbReference type="GO" id="GO:0008556">
    <property type="term" value="F:P-type potassium transmembrane transporter activity"/>
    <property type="evidence" value="ECO:0007669"/>
    <property type="project" value="InterPro"/>
</dbReference>
<dbReference type="GO" id="GO:0030955">
    <property type="term" value="F:potassium ion binding"/>
    <property type="evidence" value="ECO:0007669"/>
    <property type="project" value="UniProtKB-UniRule"/>
</dbReference>
<dbReference type="HAMAP" id="MF_00275">
    <property type="entry name" value="KdpA"/>
    <property type="match status" value="1"/>
</dbReference>
<dbReference type="InterPro" id="IPR004623">
    <property type="entry name" value="KdpA"/>
</dbReference>
<dbReference type="NCBIfam" id="TIGR00680">
    <property type="entry name" value="kdpA"/>
    <property type="match status" value="1"/>
</dbReference>
<dbReference type="PANTHER" id="PTHR30607">
    <property type="entry name" value="POTASSIUM-TRANSPORTING ATPASE A CHAIN"/>
    <property type="match status" value="1"/>
</dbReference>
<dbReference type="PANTHER" id="PTHR30607:SF2">
    <property type="entry name" value="POTASSIUM-TRANSPORTING ATPASE POTASSIUM-BINDING SUBUNIT"/>
    <property type="match status" value="1"/>
</dbReference>
<dbReference type="Pfam" id="PF03814">
    <property type="entry name" value="KdpA"/>
    <property type="match status" value="1"/>
</dbReference>
<dbReference type="PIRSF" id="PIRSF001294">
    <property type="entry name" value="K_ATPaseA"/>
    <property type="match status" value="1"/>
</dbReference>
<sequence length="564" mass="59879">MHSYDFALLLAFFVIVLLPAPWLGRFYYKVMEGQRTWLTPVLGPVEQGCYRLAGVNASQEQNWRQYTLALLAFNLVGFLLLFAVLLLQGYLPLNPQNLPGQEWSLAFNTAVSFVTNTNWQAYSGEASVSYLSQMLGLTVQNFVSPATGLAVLVVLCRGIARRSATTLGNFWVDMTRATLYGLLPLCLLLALLLVWQGVPQTFADYAHALTLQGADQTIPLGPAASQIAIKQLGTNGGGFFGVNSAHPFENPTAWSNLFEVASIILIPVALVFTFGHYVKDLRQSRAILACMLALFLIGGSTALWSEHQPNPALESTQVQQTAPLEGKESRFGTTGSVLWAVTTTAASNGSVNAMHDSLNPLTGMVAMVNMMVGEVIFGGVGAGLYGMLLFVLIAVFLAGLMIGRTPEYLGKKLQAREVQLLVATLLVMPVGVLVLGAIAASLPGPAGAVTNPGAHGFSQLLYAYTSGSANNGSAFAGFGANTVYHNLMIGLAMLIGRFGYILPILALAGSLAAKKSAPLGQNSFPTHGPLFTGLLLVTILLVGGLTFLPTLALGPIAEHLSLGF</sequence>
<keyword id="KW-0997">Cell inner membrane</keyword>
<keyword id="KW-1003">Cell membrane</keyword>
<keyword id="KW-0406">Ion transport</keyword>
<keyword id="KW-0472">Membrane</keyword>
<keyword id="KW-0630">Potassium</keyword>
<keyword id="KW-0633">Potassium transport</keyword>
<keyword id="KW-1185">Reference proteome</keyword>
<keyword id="KW-0812">Transmembrane</keyword>
<keyword id="KW-1133">Transmembrane helix</keyword>
<keyword id="KW-0813">Transport</keyword>
<accession>Q88FD7</accession>
<feature type="chain" id="PRO_0000166514" description="Potassium-transporting ATPase potassium-binding subunit">
    <location>
        <begin position="1"/>
        <end position="564"/>
    </location>
</feature>
<feature type="transmembrane region" description="Helical" evidence="1">
    <location>
        <begin position="4"/>
        <end position="24"/>
    </location>
</feature>
<feature type="transmembrane region" description="Helical" evidence="1">
    <location>
        <begin position="67"/>
        <end position="87"/>
    </location>
</feature>
<feature type="transmembrane region" description="Helical" evidence="1">
    <location>
        <begin position="135"/>
        <end position="155"/>
    </location>
</feature>
<feature type="transmembrane region" description="Helical" evidence="1">
    <location>
        <begin position="179"/>
        <end position="199"/>
    </location>
</feature>
<feature type="transmembrane region" description="Helical" evidence="1">
    <location>
        <begin position="258"/>
        <end position="278"/>
    </location>
</feature>
<feature type="transmembrane region" description="Helical" evidence="1">
    <location>
        <begin position="286"/>
        <end position="306"/>
    </location>
</feature>
<feature type="transmembrane region" description="Helical" evidence="1">
    <location>
        <begin position="382"/>
        <end position="402"/>
    </location>
</feature>
<feature type="transmembrane region" description="Helical" evidence="1">
    <location>
        <begin position="420"/>
        <end position="440"/>
    </location>
</feature>
<feature type="transmembrane region" description="Helical" evidence="1">
    <location>
        <begin position="487"/>
        <end position="507"/>
    </location>
</feature>
<feature type="transmembrane region" description="Helical" evidence="1">
    <location>
        <begin position="533"/>
        <end position="553"/>
    </location>
</feature>
<gene>
    <name evidence="1" type="primary">kdpA</name>
    <name type="ordered locus">PP_4161</name>
</gene>
<evidence type="ECO:0000255" key="1">
    <source>
        <dbReference type="HAMAP-Rule" id="MF_00275"/>
    </source>
</evidence>
<protein>
    <recommendedName>
        <fullName evidence="1">Potassium-transporting ATPase potassium-binding subunit</fullName>
    </recommendedName>
    <alternativeName>
        <fullName evidence="1">ATP phosphohydrolase [potassium-transporting] A chain</fullName>
    </alternativeName>
    <alternativeName>
        <fullName evidence="1">Potassium-binding and translocating subunit A</fullName>
    </alternativeName>
    <alternativeName>
        <fullName evidence="1">Potassium-translocating ATPase A chain</fullName>
    </alternativeName>
</protein>
<proteinExistence type="inferred from homology"/>
<comment type="function">
    <text evidence="1">Part of the high-affinity ATP-driven potassium transport (or Kdp) system, which catalyzes the hydrolysis of ATP coupled with the electrogenic transport of potassium into the cytoplasm. This subunit binds the periplasmic potassium ions and delivers the ions to the membrane domain of KdpB through an intramembrane tunnel.</text>
</comment>
<comment type="subunit">
    <text evidence="1">The system is composed of three essential subunits: KdpA, KdpB and KdpC.</text>
</comment>
<comment type="subcellular location">
    <subcellularLocation>
        <location evidence="1">Cell inner membrane</location>
        <topology evidence="1">Multi-pass membrane protein</topology>
    </subcellularLocation>
</comment>
<comment type="similarity">
    <text evidence="1">Belongs to the KdpA family.</text>
</comment>
<organism>
    <name type="scientific">Pseudomonas putida (strain ATCC 47054 / DSM 6125 / CFBP 8728 / NCIMB 11950 / KT2440)</name>
    <dbReference type="NCBI Taxonomy" id="160488"/>
    <lineage>
        <taxon>Bacteria</taxon>
        <taxon>Pseudomonadati</taxon>
        <taxon>Pseudomonadota</taxon>
        <taxon>Gammaproteobacteria</taxon>
        <taxon>Pseudomonadales</taxon>
        <taxon>Pseudomonadaceae</taxon>
        <taxon>Pseudomonas</taxon>
    </lineage>
</organism>
<name>KDPA_PSEPK</name>
<reference key="1">
    <citation type="journal article" date="2002" name="Environ. Microbiol.">
        <title>Complete genome sequence and comparative analysis of the metabolically versatile Pseudomonas putida KT2440.</title>
        <authorList>
            <person name="Nelson K.E."/>
            <person name="Weinel C."/>
            <person name="Paulsen I.T."/>
            <person name="Dodson R.J."/>
            <person name="Hilbert H."/>
            <person name="Martins dos Santos V.A.P."/>
            <person name="Fouts D.E."/>
            <person name="Gill S.R."/>
            <person name="Pop M."/>
            <person name="Holmes M."/>
            <person name="Brinkac L.M."/>
            <person name="Beanan M.J."/>
            <person name="DeBoy R.T."/>
            <person name="Daugherty S.C."/>
            <person name="Kolonay J.F."/>
            <person name="Madupu R."/>
            <person name="Nelson W.C."/>
            <person name="White O."/>
            <person name="Peterson J.D."/>
            <person name="Khouri H.M."/>
            <person name="Hance I."/>
            <person name="Chris Lee P."/>
            <person name="Holtzapple E.K."/>
            <person name="Scanlan D."/>
            <person name="Tran K."/>
            <person name="Moazzez A."/>
            <person name="Utterback T.R."/>
            <person name="Rizzo M."/>
            <person name="Lee K."/>
            <person name="Kosack D."/>
            <person name="Moestl D."/>
            <person name="Wedler H."/>
            <person name="Lauber J."/>
            <person name="Stjepandic D."/>
            <person name="Hoheisel J."/>
            <person name="Straetz M."/>
            <person name="Heim S."/>
            <person name="Kiewitz C."/>
            <person name="Eisen J.A."/>
            <person name="Timmis K.N."/>
            <person name="Duesterhoeft A."/>
            <person name="Tuemmler B."/>
            <person name="Fraser C.M."/>
        </authorList>
    </citation>
    <scope>NUCLEOTIDE SEQUENCE [LARGE SCALE GENOMIC DNA]</scope>
    <source>
        <strain>ATCC 47054 / DSM 6125 / CFBP 8728 / NCIMB 11950 / KT2440</strain>
    </source>
</reference>